<sequence length="133" mass="15068">MDPEYSELFERLNKQLDNVEDVLKPLKDAESIFELAEGKSELEQAKLYITMSYAINSTLYSFYKLNGIDASERPVMQELQRVKNYISKIQQAEKNVNPKTEAVNTSNAAISSSSSNRPKVAKDAATRIIKHHT</sequence>
<organism>
    <name type="scientific">Schizosaccharomyces pombe (strain 972 / ATCC 24843)</name>
    <name type="common">Fission yeast</name>
    <dbReference type="NCBI Taxonomy" id="284812"/>
    <lineage>
        <taxon>Eukaryota</taxon>
        <taxon>Fungi</taxon>
        <taxon>Dikarya</taxon>
        <taxon>Ascomycota</taxon>
        <taxon>Taphrinomycotina</taxon>
        <taxon>Schizosaccharomycetes</taxon>
        <taxon>Schizosaccharomycetales</taxon>
        <taxon>Schizosaccharomycetaceae</taxon>
        <taxon>Schizosaccharomyces</taxon>
    </lineage>
</organism>
<protein>
    <recommendedName>
        <fullName>Exosome complex protein C1739.07</fullName>
    </recommendedName>
</protein>
<dbReference type="EMBL" id="CU329672">
    <property type="protein sequence ID" value="CAA20781.1"/>
    <property type="molecule type" value="Genomic_DNA"/>
</dbReference>
<dbReference type="PIR" id="T41115">
    <property type="entry name" value="T41115"/>
</dbReference>
<dbReference type="SMR" id="O74469"/>
<dbReference type="BioGRID" id="275677">
    <property type="interactions" value="9"/>
</dbReference>
<dbReference type="FunCoup" id="O74469">
    <property type="interactions" value="72"/>
</dbReference>
<dbReference type="IntAct" id="O74469">
    <property type="interactions" value="3"/>
</dbReference>
<dbReference type="STRING" id="284812.O74469"/>
<dbReference type="iPTMnet" id="O74469"/>
<dbReference type="PaxDb" id="4896-SPCC1739.07.1"/>
<dbReference type="EnsemblFungi" id="SPCC1739.07.1">
    <property type="protein sequence ID" value="SPCC1739.07.1:pep"/>
    <property type="gene ID" value="SPCC1739.07"/>
</dbReference>
<dbReference type="KEGG" id="spo:2539105"/>
<dbReference type="PomBase" id="SPCC1739.07"/>
<dbReference type="VEuPathDB" id="FungiDB:SPCC1739.07"/>
<dbReference type="eggNOG" id="KOG4835">
    <property type="taxonomic scope" value="Eukaryota"/>
</dbReference>
<dbReference type="HOGENOM" id="CLU_064339_3_0_1"/>
<dbReference type="InParanoid" id="O74469"/>
<dbReference type="OMA" id="RIIKHHT"/>
<dbReference type="PhylomeDB" id="O74469"/>
<dbReference type="Reactome" id="R-SPO-6791226">
    <property type="pathway name" value="Major pathway of rRNA processing in the nucleolus and cytosol"/>
</dbReference>
<dbReference type="PRO" id="PR:O74469"/>
<dbReference type="Proteomes" id="UP000002485">
    <property type="component" value="Chromosome III"/>
</dbReference>
<dbReference type="GO" id="GO:0005829">
    <property type="term" value="C:cytosol"/>
    <property type="evidence" value="ECO:0007005"/>
    <property type="project" value="PomBase"/>
</dbReference>
<dbReference type="GO" id="GO:0000178">
    <property type="term" value="C:exosome (RNase complex)"/>
    <property type="evidence" value="ECO:0000314"/>
    <property type="project" value="PomBase"/>
</dbReference>
<dbReference type="GO" id="GO:0000176">
    <property type="term" value="C:nuclear exosome (RNase complex)"/>
    <property type="evidence" value="ECO:0000266"/>
    <property type="project" value="PomBase"/>
</dbReference>
<dbReference type="GO" id="GO:0005730">
    <property type="term" value="C:nucleolus"/>
    <property type="evidence" value="ECO:0000314"/>
    <property type="project" value="PomBase"/>
</dbReference>
<dbReference type="GO" id="GO:0005634">
    <property type="term" value="C:nucleus"/>
    <property type="evidence" value="ECO:0000314"/>
    <property type="project" value="PomBase"/>
</dbReference>
<dbReference type="GO" id="GO:0003677">
    <property type="term" value="F:DNA binding"/>
    <property type="evidence" value="ECO:0000318"/>
    <property type="project" value="GO_Central"/>
</dbReference>
<dbReference type="GO" id="GO:0003723">
    <property type="term" value="F:RNA binding"/>
    <property type="evidence" value="ECO:0000318"/>
    <property type="project" value="GO_Central"/>
</dbReference>
<dbReference type="GO" id="GO:0000467">
    <property type="term" value="P:exonucleolytic trimming to generate mature 3'-end of 5.8S rRNA from tricistronic rRNA transcript (SSU-rRNA, 5.8S rRNA, LSU-rRNA)"/>
    <property type="evidence" value="ECO:0000266"/>
    <property type="project" value="PomBase"/>
</dbReference>
<dbReference type="GO" id="GO:0000460">
    <property type="term" value="P:maturation of 5.8S rRNA"/>
    <property type="evidence" value="ECO:0000318"/>
    <property type="project" value="GO_Central"/>
</dbReference>
<dbReference type="GO" id="GO:0070651">
    <property type="term" value="P:nonfunctional rRNA decay"/>
    <property type="evidence" value="ECO:0000266"/>
    <property type="project" value="PomBase"/>
</dbReference>
<dbReference type="GO" id="GO:0071028">
    <property type="term" value="P:nuclear mRNA surveillance"/>
    <property type="evidence" value="ECO:0000304"/>
    <property type="project" value="PomBase"/>
</dbReference>
<dbReference type="GO" id="GO:0071042">
    <property type="term" value="P:nuclear polyadenylation-dependent mRNA catabolic process"/>
    <property type="evidence" value="ECO:0000266"/>
    <property type="project" value="PomBase"/>
</dbReference>
<dbReference type="GO" id="GO:0071035">
    <property type="term" value="P:nuclear polyadenylation-dependent rRNA catabolic process"/>
    <property type="evidence" value="ECO:0000266"/>
    <property type="project" value="PomBase"/>
</dbReference>
<dbReference type="GO" id="GO:0071051">
    <property type="term" value="P:poly(A)-dependent snoRNA 3'-end processing"/>
    <property type="evidence" value="ECO:0000266"/>
    <property type="project" value="PomBase"/>
</dbReference>
<dbReference type="GO" id="GO:0010468">
    <property type="term" value="P:regulation of gene expression"/>
    <property type="evidence" value="ECO:0000318"/>
    <property type="project" value="GO_Central"/>
</dbReference>
<dbReference type="GO" id="GO:0034472">
    <property type="term" value="P:snRNA 3'-end processing"/>
    <property type="evidence" value="ECO:0000266"/>
    <property type="project" value="PomBase"/>
</dbReference>
<dbReference type="GO" id="GO:0071038">
    <property type="term" value="P:TRAMP-dependent tRNA surveillance pathway"/>
    <property type="evidence" value="ECO:0000266"/>
    <property type="project" value="PomBase"/>
</dbReference>
<dbReference type="InterPro" id="IPR011082">
    <property type="entry name" value="Exosome-assoc_fac/DNA_repair"/>
</dbReference>
<dbReference type="InterPro" id="IPR007146">
    <property type="entry name" value="Sas10/Utp3/C1D"/>
</dbReference>
<dbReference type="PANTHER" id="PTHR15341:SF3">
    <property type="entry name" value="NUCLEAR NUCLEIC ACID-BINDING PROTEIN C1D"/>
    <property type="match status" value="1"/>
</dbReference>
<dbReference type="PANTHER" id="PTHR15341">
    <property type="entry name" value="SUN-COR STEROID HORMONE RECEPTOR CO-REPRESSOR"/>
    <property type="match status" value="1"/>
</dbReference>
<dbReference type="Pfam" id="PF04000">
    <property type="entry name" value="Sas10_Utp3"/>
    <property type="match status" value="1"/>
</dbReference>
<evidence type="ECO:0000250" key="1"/>
<evidence type="ECO:0000256" key="2">
    <source>
        <dbReference type="SAM" id="MobiDB-lite"/>
    </source>
</evidence>
<evidence type="ECO:0000269" key="3">
    <source>
    </source>
</evidence>
<evidence type="ECO:0000269" key="4">
    <source>
    </source>
</evidence>
<evidence type="ECO:0000305" key="5"/>
<feature type="chain" id="PRO_0000339128" description="Exosome complex protein C1739.07">
    <location>
        <begin position="1"/>
        <end position="133"/>
    </location>
</feature>
<feature type="region of interest" description="Disordered" evidence="2">
    <location>
        <begin position="96"/>
        <end position="133"/>
    </location>
</feature>
<feature type="compositionally biased region" description="Low complexity" evidence="2">
    <location>
        <begin position="102"/>
        <end position="116"/>
    </location>
</feature>
<gene>
    <name type="ORF">SPCC1739.07</name>
</gene>
<keyword id="KW-0963">Cytoplasm</keyword>
<keyword id="KW-0271">Exosome</keyword>
<keyword id="KW-0539">Nucleus</keyword>
<keyword id="KW-1185">Reference proteome</keyword>
<keyword id="KW-0694">RNA-binding</keyword>
<keyword id="KW-0698">rRNA processing</keyword>
<accession>O74469</accession>
<name>YQC7_SCHPO</name>
<comment type="function">
    <text evidence="1">Required for exosome-dependent processing of pre-rRNA and small nucleolar RNA (snRNA) precursors. Involved in processing of 35S pre-rRNA at the A0, A1 and A2 sites (By similarity).</text>
</comment>
<comment type="subunit">
    <text evidence="1 3">Component of the exosome multienzyme ribonuclease complex (By similarity). Interacts with cut3.</text>
</comment>
<comment type="interaction">
    <interactant intactId="EBI-1149494">
        <id>O74469</id>
    </interactant>
    <interactant intactId="EBI-1149474">
        <id>P41004</id>
        <label>cut3</label>
    </interactant>
    <organismsDiffer>false</organismsDiffer>
    <experiments>3</experiments>
</comment>
<comment type="subcellular location">
    <subcellularLocation>
        <location evidence="4">Cytoplasm</location>
    </subcellularLocation>
    <subcellularLocation>
        <location evidence="4">Nucleus</location>
    </subcellularLocation>
</comment>
<comment type="similarity">
    <text evidence="5">Belongs to the C1D family.</text>
</comment>
<reference key="1">
    <citation type="journal article" date="2002" name="Nature">
        <title>The genome sequence of Schizosaccharomyces pombe.</title>
        <authorList>
            <person name="Wood V."/>
            <person name="Gwilliam R."/>
            <person name="Rajandream M.A."/>
            <person name="Lyne M.H."/>
            <person name="Lyne R."/>
            <person name="Stewart A."/>
            <person name="Sgouros J.G."/>
            <person name="Peat N."/>
            <person name="Hayles J."/>
            <person name="Baker S.G."/>
            <person name="Basham D."/>
            <person name="Bowman S."/>
            <person name="Brooks K."/>
            <person name="Brown D."/>
            <person name="Brown S."/>
            <person name="Chillingworth T."/>
            <person name="Churcher C.M."/>
            <person name="Collins M."/>
            <person name="Connor R."/>
            <person name="Cronin A."/>
            <person name="Davis P."/>
            <person name="Feltwell T."/>
            <person name="Fraser A."/>
            <person name="Gentles S."/>
            <person name="Goble A."/>
            <person name="Hamlin N."/>
            <person name="Harris D.E."/>
            <person name="Hidalgo J."/>
            <person name="Hodgson G."/>
            <person name="Holroyd S."/>
            <person name="Hornsby T."/>
            <person name="Howarth S."/>
            <person name="Huckle E.J."/>
            <person name="Hunt S."/>
            <person name="Jagels K."/>
            <person name="James K.D."/>
            <person name="Jones L."/>
            <person name="Jones M."/>
            <person name="Leather S."/>
            <person name="McDonald S."/>
            <person name="McLean J."/>
            <person name="Mooney P."/>
            <person name="Moule S."/>
            <person name="Mungall K.L."/>
            <person name="Murphy L.D."/>
            <person name="Niblett D."/>
            <person name="Odell C."/>
            <person name="Oliver K."/>
            <person name="O'Neil S."/>
            <person name="Pearson D."/>
            <person name="Quail M.A."/>
            <person name="Rabbinowitsch E."/>
            <person name="Rutherford K.M."/>
            <person name="Rutter S."/>
            <person name="Saunders D."/>
            <person name="Seeger K."/>
            <person name="Sharp S."/>
            <person name="Skelton J."/>
            <person name="Simmonds M.N."/>
            <person name="Squares R."/>
            <person name="Squares S."/>
            <person name="Stevens K."/>
            <person name="Taylor K."/>
            <person name="Taylor R.G."/>
            <person name="Tivey A."/>
            <person name="Walsh S.V."/>
            <person name="Warren T."/>
            <person name="Whitehead S."/>
            <person name="Woodward J.R."/>
            <person name="Volckaert G."/>
            <person name="Aert R."/>
            <person name="Robben J."/>
            <person name="Grymonprez B."/>
            <person name="Weltjens I."/>
            <person name="Vanstreels E."/>
            <person name="Rieger M."/>
            <person name="Schaefer M."/>
            <person name="Mueller-Auer S."/>
            <person name="Gabel C."/>
            <person name="Fuchs M."/>
            <person name="Duesterhoeft A."/>
            <person name="Fritzc C."/>
            <person name="Holzer E."/>
            <person name="Moestl D."/>
            <person name="Hilbert H."/>
            <person name="Borzym K."/>
            <person name="Langer I."/>
            <person name="Beck A."/>
            <person name="Lehrach H."/>
            <person name="Reinhardt R."/>
            <person name="Pohl T.M."/>
            <person name="Eger P."/>
            <person name="Zimmermann W."/>
            <person name="Wedler H."/>
            <person name="Wambutt R."/>
            <person name="Purnelle B."/>
            <person name="Goffeau A."/>
            <person name="Cadieu E."/>
            <person name="Dreano S."/>
            <person name="Gloux S."/>
            <person name="Lelaure V."/>
            <person name="Mottier S."/>
            <person name="Galibert F."/>
            <person name="Aves S.J."/>
            <person name="Xiang Z."/>
            <person name="Hunt C."/>
            <person name="Moore K."/>
            <person name="Hurst S.M."/>
            <person name="Lucas M."/>
            <person name="Rochet M."/>
            <person name="Gaillardin C."/>
            <person name="Tallada V.A."/>
            <person name="Garzon A."/>
            <person name="Thode G."/>
            <person name="Daga R.R."/>
            <person name="Cruzado L."/>
            <person name="Jimenez J."/>
            <person name="Sanchez M."/>
            <person name="del Rey F."/>
            <person name="Benito J."/>
            <person name="Dominguez A."/>
            <person name="Revuelta J.L."/>
            <person name="Moreno S."/>
            <person name="Armstrong J."/>
            <person name="Forsburg S.L."/>
            <person name="Cerutti L."/>
            <person name="Lowe T."/>
            <person name="McCombie W.R."/>
            <person name="Paulsen I."/>
            <person name="Potashkin J."/>
            <person name="Shpakovski G.V."/>
            <person name="Ussery D."/>
            <person name="Barrell B.G."/>
            <person name="Nurse P."/>
        </authorList>
    </citation>
    <scope>NUCLEOTIDE SEQUENCE [LARGE SCALE GENOMIC DNA]</scope>
    <source>
        <strain>972 / ATCC 24843</strain>
    </source>
</reference>
<reference key="2">
    <citation type="journal article" date="2004" name="Proc. Natl. Acad. Sci. U.S.A.">
        <title>Cti1/C1D interacts with condensin SMC hinge and supports the DNA repair function of condensin.</title>
        <authorList>
            <person name="Chen E.S."/>
            <person name="Sutani T."/>
            <person name="Yanagida M."/>
        </authorList>
    </citation>
    <scope>INTERACTION WITH CUT3</scope>
</reference>
<reference key="3">
    <citation type="journal article" date="2006" name="Nat. Biotechnol.">
        <title>ORFeome cloning and global analysis of protein localization in the fission yeast Schizosaccharomyces pombe.</title>
        <authorList>
            <person name="Matsuyama A."/>
            <person name="Arai R."/>
            <person name="Yashiroda Y."/>
            <person name="Shirai A."/>
            <person name="Kamata A."/>
            <person name="Sekido S."/>
            <person name="Kobayashi Y."/>
            <person name="Hashimoto A."/>
            <person name="Hamamoto M."/>
            <person name="Hiraoka Y."/>
            <person name="Horinouchi S."/>
            <person name="Yoshida M."/>
        </authorList>
    </citation>
    <scope>SUBCELLULAR LOCATION [LARGE SCALE ANALYSIS]</scope>
</reference>
<proteinExistence type="evidence at protein level"/>